<accession>Q91ID5</accession>
<comment type="subcellular location">
    <subcellularLocation>
        <location evidence="2">Virion</location>
    </subcellularLocation>
</comment>
<protein>
    <recommendedName>
        <fullName>Putative structural protein VP5</fullName>
    </recommendedName>
</protein>
<reference key="1">
    <citation type="submission" date="2001-06" db="EMBL/GenBank/DDBJ databases">
        <title>Identification of dsRNA electrophoretypes of two cypoviruses from a dual infection in gypsy moth, Lymantria dispar.</title>
        <authorList>
            <person name="Rao S."/>
            <person name="Shapiro M."/>
            <person name="Lynn D."/>
            <person name="Hagiwara K."/>
            <person name="Blackmon B."/>
            <person name="Fang G."/>
            <person name="Carner G.R."/>
        </authorList>
    </citation>
    <scope>NUCLEOTIDE SEQUENCE [GENOMIC RNA]</scope>
</reference>
<proteinExistence type="predicted"/>
<gene>
    <name type="primary">S8</name>
</gene>
<organism>
    <name type="scientific">Lymantria dispar cypovirus 1 (isolate Rao)</name>
    <name type="common">LdCPV-1</name>
    <dbReference type="NCBI Taxonomy" id="648169"/>
    <lineage>
        <taxon>Viruses</taxon>
        <taxon>Riboviria</taxon>
        <taxon>Orthornavirae</taxon>
        <taxon>Duplornaviricota</taxon>
        <taxon>Resentoviricetes</taxon>
        <taxon>Reovirales</taxon>
        <taxon>Spinareoviridae</taxon>
        <taxon>Cypovirus</taxon>
        <taxon>Cypovirus 1</taxon>
    </lineage>
</organism>
<evidence type="ECO:0000256" key="1">
    <source>
        <dbReference type="SAM" id="MobiDB-lite"/>
    </source>
</evidence>
<evidence type="ECO:0000305" key="2"/>
<dbReference type="EMBL" id="AF389468">
    <property type="protein sequence ID" value="AAK73526.1"/>
    <property type="molecule type" value="Genomic_RNA"/>
</dbReference>
<dbReference type="RefSeq" id="NP_149152.1">
    <property type="nucleotide sequence ID" value="NC_003022.1"/>
</dbReference>
<dbReference type="SMR" id="Q91ID5"/>
<dbReference type="KEGG" id="vg:2598194"/>
<dbReference type="Proteomes" id="UP000006712">
    <property type="component" value="Genome"/>
</dbReference>
<dbReference type="GO" id="GO:0039624">
    <property type="term" value="C:viral outer capsid"/>
    <property type="evidence" value="ECO:0007669"/>
    <property type="project" value="UniProtKB-KW"/>
</dbReference>
<dbReference type="InterPro" id="IPR049423">
    <property type="entry name" value="VP5"/>
</dbReference>
<dbReference type="Pfam" id="PF20807">
    <property type="entry name" value="VP5"/>
    <property type="match status" value="1"/>
</dbReference>
<keyword id="KW-0167">Capsid protein</keyword>
<keyword id="KW-1152">Outer capsid protein</keyword>
<keyword id="KW-1185">Reference proteome</keyword>
<keyword id="KW-0946">Virion</keyword>
<feature type="chain" id="PRO_0000403208" description="Putative structural protein VP5">
    <location>
        <begin position="1"/>
        <end position="448"/>
    </location>
</feature>
<feature type="region of interest" description="Disordered" evidence="1">
    <location>
        <begin position="418"/>
        <end position="448"/>
    </location>
</feature>
<feature type="compositionally biased region" description="Polar residues" evidence="1">
    <location>
        <begin position="431"/>
        <end position="442"/>
    </location>
</feature>
<sequence>MLQQPAGGYTTLEQFTFTIRNDGTNATPTQFLQLLSYEATENELVKKAIPTPETHLPSARNVPGNVYIEDAITQALFGISAQNVNAHGYFSRLSALALPNTSARLGLDGVIYNNETVGIPFYDPVAVAKFATTYAKLGNASTPRYRADMIDIYAHVGLELAGTDAERAAGVMPVKRAKFDSWEGSLISLSRDVVYWKNLAFLIDLCSLEGDALNTFKTRNRDAFRMMLFIMSTAVAANVVNRKVTKRVDRVIEYIGSNSMRTAGRTATITYDLSRHEFAAKFLQLTFTKWNATQATTRSMPDMRTPRTSVTSAGESALVRHNRYMTESFKGLSPIALAQKKHEMMLHTHEIHSMDIDGSIKNMVERETVNKMNEIDAMNTMSWKEEIHAVEQTTVHGTHQMSADPEQTQLISQETAVITHRASSDADENEYGNSVSEMTIGTHSDDIL</sequence>
<name>VP5_LDCPR</name>
<organismHost>
    <name type="scientific">Lymantria dispar</name>
    <name type="common">Gypsy moth</name>
    <name type="synonym">Porthetria dispar</name>
    <dbReference type="NCBI Taxonomy" id="13123"/>
</organismHost>